<feature type="chain" id="PRO_0000212733" description="Disease resistance protein SUMM2">
    <location>
        <begin position="1"/>
        <end position="894"/>
    </location>
</feature>
<feature type="domain" description="NB-ARC">
    <location>
        <begin position="140"/>
        <end position="443"/>
    </location>
</feature>
<feature type="repeat" description="LRR 1">
    <location>
        <begin position="517"/>
        <end position="538"/>
    </location>
</feature>
<feature type="repeat" description="LRR 2">
    <location>
        <begin position="539"/>
        <end position="561"/>
    </location>
</feature>
<feature type="repeat" description="LRR 3">
    <location>
        <begin position="564"/>
        <end position="586"/>
    </location>
</feature>
<feature type="repeat" description="LRR 4">
    <location>
        <begin position="588"/>
        <end position="610"/>
    </location>
</feature>
<feature type="repeat" description="LRR 5">
    <location>
        <begin position="611"/>
        <end position="633"/>
    </location>
</feature>
<feature type="repeat" description="LRR 6">
    <location>
        <begin position="634"/>
        <end position="656"/>
    </location>
</feature>
<feature type="repeat" description="LRR 7">
    <location>
        <begin position="660"/>
        <end position="681"/>
    </location>
</feature>
<feature type="coiled-coil region" evidence="2">
    <location>
        <begin position="31"/>
        <end position="71"/>
    </location>
</feature>
<feature type="binding site" evidence="2">
    <location>
        <begin position="183"/>
        <end position="190"/>
    </location>
    <ligand>
        <name>ATP</name>
        <dbReference type="ChEBI" id="CHEBI:30616"/>
    </ligand>
</feature>
<feature type="mutagenesis site" description="In summ2-5; suppresses the extreme dwarfism and autoimmune phenotype of the double mutant mkk1 and mkk2." evidence="3">
    <original>G</original>
    <variation>R</variation>
    <location>
        <position position="2"/>
    </location>
</feature>
<feature type="mutagenesis site" description="In summ2-6; suppresses the extreme dwarfism and autoimmune phenotype of the double mutant mkk1 and mkk2." evidence="3">
    <original>S</original>
    <variation>F</variation>
    <location>
        <position position="33"/>
    </location>
</feature>
<feature type="mutagenesis site" description="In summ2-7; suppresses the extreme dwarfism and autoimmune phenotype of the double mutant mkk1 and mkk2." evidence="3">
    <original>P</original>
    <variation>S</variation>
    <location>
        <position position="152"/>
    </location>
</feature>
<feature type="mutagenesis site" description="In summ2-2; suppresses the extreme dwarfism and autoimmune phenotype of the double mutant mkk1 and mkk2." evidence="3">
    <original>G</original>
    <variation>E</variation>
    <location>
        <position position="186"/>
    </location>
</feature>
<feature type="mutagenesis site" description="In summ2-1; suppresses the extreme dwarfism and autoimmune phenotype of the double mutant mkk1 and mkk2." evidence="3">
    <original>L</original>
    <variation>S</variation>
    <location>
        <position position="255"/>
    </location>
</feature>
<feature type="mutagenesis site" description="In summ2-3; suppresses the extreme dwarfism and autoimmune phenotype of the double mutant mkk1 and mkk2." evidence="3">
    <original>P</original>
    <variation>S</variation>
    <location>
        <position position="307"/>
    </location>
</feature>
<feature type="mutagenesis site" description="Constitutively active protein that induces pathogen-independent hypersensitive response." evidence="3">
    <original>D</original>
    <variation>V</variation>
    <location>
        <position position="478"/>
    </location>
</feature>
<comment type="function">
    <text evidence="3 4">Disease resistance protein that mediates defense responses against the bacterial pathogen Pseudomonas syringae pv tomato strain DC3000, and the virulent oomycete Hyaloperonospora arabidopsidis isolate Noco2. Becomes active when the MEKK1-MKK1-MKK2-MPK4 kinase cascade is disrupted by the microbial effector hopAI1. Does not seem to be required for the activation of MPK4 by flg22, or flg22-induced up-regulation of PAD3 (PubMed:22423965). Functions downstream of MEKK2/SUMM1 in immune responses, including cell death and defense responses (PubMed:22643122).</text>
</comment>
<comment type="activity regulation">
    <text evidence="3">Negatively regulated by the MEKK1-MKK1-MKK2-MPK4 kinase cascade.</text>
</comment>
<comment type="subunit">
    <text evidence="5">Interacts with PAT1.</text>
</comment>
<comment type="domain">
    <text evidence="1">The LRR repeats probably act as specificity determinant of pathogen recognition.</text>
</comment>
<comment type="similarity">
    <text evidence="7">Belongs to the disease resistance NB-LRR family.</text>
</comment>
<comment type="sequence caution" evidence="7">
    <conflict type="erroneous gene model prediction">
        <sequence resource="EMBL-CDS" id="AAF79659"/>
    </conflict>
</comment>
<comment type="online information" name="NIB-LRRS">
    <link uri="http://niblrrs.ucdavis.edu"/>
    <text>Functional and comparative genomics of disease resistance gene homologs</text>
</comment>
<sequence length="894" mass="102641">MGACLTLSFSCDEVVNQISQGLCINVGYICELSKNVVAMKKDMEVLKKKRDDVKRRVDIEEFTRRRERLSQVQGWLTNVSTVENKFNELLTTNDAELQRLCLFGFCSKNVKMSYLYGKRVVLMLKEIESLSSQGDFDTVTLATPIARIEEMPIQPTIVGQETMLERVWTRLTEDGDEIVGLYGMGGVGKTTLLTRINNKFSEKCSGFGVVIWVVVSKSPDIHRIQGDIGKRLDLGGEEWDNVNENQRALDIYNVLGKQKFVLLLDDIWEKVNLEVLGVPYPSRQNGCKVVFTTRSRDVCGRMRVDDPMEVSCLEPNEAWELFQMKVGENTLKGHPDIPELARKVAGKCCGLPLALNVIGETMACKRMVQEWRNAIDVLSSYAAEFPGMEQILPILKYSYDNLNKEQVKPCFLYCSLFPEDYRMEKERLIDYWICEGFIDENESRERALSQGYEIIGILVRACLLLEEAINKEQVKMHDVVREMALWIASDLGEHKERCIVQVGVGLREVPKVKNWSSVRRMSLMENEIEILSGSPECLELTTLFLQKNDSLLHISDEFFRCIPMLVVLDLSGNSSLRKLPNQISKLVSLRYLDLSWTYIKRLPVGLQELKKLRYLRLDYMKRLKSISGISNISSLRKLQLLQSKMSLDMSLVEELQLLEHLEVLNISIKSSLVVEKLLNAPRLVKCLQILVLRGVQEESSGVLTLPDMDNLNKVIIRKCGMCEIKIERKTLSLSSNRSPKTQFLHNLSTVHISSCDGLKDLTWLLFAPNLTSLEVLDSELVEGIINQEKAMTMSGIIPFQKLESLRLHNLAMLRSIYWQPLSFPCLKTIHITKCPELRKLPLDSEIAIRDEELVIKYQEEEWLERVEWDNEATRLRFLPFFKFFGPEWQVSYVR</sequence>
<organism>
    <name type="scientific">Arabidopsis thaliana</name>
    <name type="common">Mouse-ear cress</name>
    <dbReference type="NCBI Taxonomy" id="3702"/>
    <lineage>
        <taxon>Eukaryota</taxon>
        <taxon>Viridiplantae</taxon>
        <taxon>Streptophyta</taxon>
        <taxon>Embryophyta</taxon>
        <taxon>Tracheophyta</taxon>
        <taxon>Spermatophyta</taxon>
        <taxon>Magnoliopsida</taxon>
        <taxon>eudicotyledons</taxon>
        <taxon>Gunneridae</taxon>
        <taxon>Pentapetalae</taxon>
        <taxon>rosids</taxon>
        <taxon>malvids</taxon>
        <taxon>Brassicales</taxon>
        <taxon>Brassicaceae</taxon>
        <taxon>Camelineae</taxon>
        <taxon>Arabidopsis</taxon>
    </lineage>
</organism>
<accession>P60838</accession>
<accession>Q9LNB5</accession>
<protein>
    <recommendedName>
        <fullName evidence="7">Disease resistance protein SUMM2</fullName>
    </recommendedName>
    <alternativeName>
        <fullName evidence="7">Disease resistance protein At1g12280</fullName>
    </alternativeName>
    <alternativeName>
        <fullName evidence="6">Protein SUPPRESSOR OF MKK1 MKK2 2</fullName>
    </alternativeName>
</protein>
<name>SUMM2_ARATH</name>
<keyword id="KW-0067">ATP-binding</keyword>
<keyword id="KW-0175">Coiled coil</keyword>
<keyword id="KW-0433">Leucine-rich repeat</keyword>
<keyword id="KW-0547">Nucleotide-binding</keyword>
<keyword id="KW-0611">Plant defense</keyword>
<keyword id="KW-1185">Reference proteome</keyword>
<keyword id="KW-0677">Repeat</keyword>
<gene>
    <name evidence="6" type="primary">SUMM2</name>
    <name evidence="8" type="ordered locus">At1g12280</name>
    <name evidence="9" type="ORF">F5O11.3</name>
</gene>
<evidence type="ECO:0000250" key="1"/>
<evidence type="ECO:0000255" key="2"/>
<evidence type="ECO:0000269" key="3">
    <source>
    </source>
</evidence>
<evidence type="ECO:0000269" key="4">
    <source>
    </source>
</evidence>
<evidence type="ECO:0000269" key="5">
    <source>
    </source>
</evidence>
<evidence type="ECO:0000303" key="6">
    <source>
    </source>
</evidence>
<evidence type="ECO:0000305" key="7"/>
<evidence type="ECO:0000312" key="8">
    <source>
        <dbReference type="Araport" id="AT1G12280"/>
    </source>
</evidence>
<evidence type="ECO:0000312" key="9">
    <source>
        <dbReference type="EMBL" id="AAF79659.1"/>
    </source>
</evidence>
<proteinExistence type="evidence at protein level"/>
<dbReference type="EMBL" id="AC025416">
    <property type="protein sequence ID" value="AAF79659.1"/>
    <property type="status" value="ALT_SEQ"/>
    <property type="molecule type" value="Genomic_DNA"/>
</dbReference>
<dbReference type="EMBL" id="CP002684">
    <property type="protein sequence ID" value="AEE28861.1"/>
    <property type="molecule type" value="Genomic_DNA"/>
</dbReference>
<dbReference type="RefSeq" id="NP_172692.1">
    <property type="nucleotide sequence ID" value="NM_101100.2"/>
</dbReference>
<dbReference type="SMR" id="P60838"/>
<dbReference type="BioGRID" id="23022">
    <property type="interactions" value="3"/>
</dbReference>
<dbReference type="FunCoup" id="P60838">
    <property type="interactions" value="228"/>
</dbReference>
<dbReference type="STRING" id="3702.P60838"/>
<dbReference type="iPTMnet" id="P60838"/>
<dbReference type="PaxDb" id="3702-AT1G12280.1"/>
<dbReference type="ProteomicsDB" id="228402"/>
<dbReference type="EnsemblPlants" id="AT1G12280.1">
    <property type="protein sequence ID" value="AT1G12280.1"/>
    <property type="gene ID" value="AT1G12280"/>
</dbReference>
<dbReference type="GeneID" id="837782"/>
<dbReference type="Gramene" id="AT1G12280.1">
    <property type="protein sequence ID" value="AT1G12280.1"/>
    <property type="gene ID" value="AT1G12280"/>
</dbReference>
<dbReference type="KEGG" id="ath:AT1G12280"/>
<dbReference type="Araport" id="AT1G12280"/>
<dbReference type="TAIR" id="AT1G12280">
    <property type="gene designation" value="SUMM2"/>
</dbReference>
<dbReference type="eggNOG" id="KOG4658">
    <property type="taxonomic scope" value="Eukaryota"/>
</dbReference>
<dbReference type="HOGENOM" id="CLU_000427_4_0_1"/>
<dbReference type="InParanoid" id="P60838"/>
<dbReference type="OMA" id="HEWRSAI"/>
<dbReference type="PhylomeDB" id="P60838"/>
<dbReference type="PRO" id="PR:P60838"/>
<dbReference type="Proteomes" id="UP000006548">
    <property type="component" value="Chromosome 1"/>
</dbReference>
<dbReference type="ExpressionAtlas" id="P60838">
    <property type="expression patterns" value="baseline and differential"/>
</dbReference>
<dbReference type="GO" id="GO:0043531">
    <property type="term" value="F:ADP binding"/>
    <property type="evidence" value="ECO:0007669"/>
    <property type="project" value="InterPro"/>
</dbReference>
<dbReference type="GO" id="GO:0005524">
    <property type="term" value="F:ATP binding"/>
    <property type="evidence" value="ECO:0007669"/>
    <property type="project" value="UniProtKB-KW"/>
</dbReference>
<dbReference type="GO" id="GO:0006952">
    <property type="term" value="P:defense response"/>
    <property type="evidence" value="ECO:0000316"/>
    <property type="project" value="TAIR"/>
</dbReference>
<dbReference type="FunFam" id="3.40.50.300:FF:001091">
    <property type="entry name" value="Probable disease resistance protein At1g61300"/>
    <property type="match status" value="1"/>
</dbReference>
<dbReference type="FunFam" id="1.10.10.10:FF:000322">
    <property type="entry name" value="Probable disease resistance protein At1g63360"/>
    <property type="match status" value="1"/>
</dbReference>
<dbReference type="FunFam" id="1.10.8.430:FF:000003">
    <property type="entry name" value="Probable disease resistance protein At5g66910"/>
    <property type="match status" value="1"/>
</dbReference>
<dbReference type="Gene3D" id="1.10.8.430">
    <property type="entry name" value="Helical domain of apoptotic protease-activating factors"/>
    <property type="match status" value="1"/>
</dbReference>
<dbReference type="Gene3D" id="3.40.50.300">
    <property type="entry name" value="P-loop containing nucleotide triphosphate hydrolases"/>
    <property type="match status" value="1"/>
</dbReference>
<dbReference type="Gene3D" id="3.80.10.10">
    <property type="entry name" value="Ribonuclease Inhibitor"/>
    <property type="match status" value="3"/>
</dbReference>
<dbReference type="Gene3D" id="1.10.10.10">
    <property type="entry name" value="Winged helix-like DNA-binding domain superfamily/Winged helix DNA-binding domain"/>
    <property type="match status" value="1"/>
</dbReference>
<dbReference type="InterPro" id="IPR042197">
    <property type="entry name" value="Apaf_helical"/>
</dbReference>
<dbReference type="InterPro" id="IPR032675">
    <property type="entry name" value="LRR_dom_sf"/>
</dbReference>
<dbReference type="InterPro" id="IPR055414">
    <property type="entry name" value="LRR_R13L4/SHOC2-like"/>
</dbReference>
<dbReference type="InterPro" id="IPR002182">
    <property type="entry name" value="NB-ARC"/>
</dbReference>
<dbReference type="InterPro" id="IPR027417">
    <property type="entry name" value="P-loop_NTPase"/>
</dbReference>
<dbReference type="InterPro" id="IPR050905">
    <property type="entry name" value="Plant_NBS-LRR"/>
</dbReference>
<dbReference type="InterPro" id="IPR036388">
    <property type="entry name" value="WH-like_DNA-bd_sf"/>
</dbReference>
<dbReference type="PANTHER" id="PTHR33463:SF220">
    <property type="entry name" value="NB-ARC DOMAIN-CONTAINING PROTEIN"/>
    <property type="match status" value="1"/>
</dbReference>
<dbReference type="PANTHER" id="PTHR33463">
    <property type="entry name" value="NB-ARC DOMAIN-CONTAINING PROTEIN-RELATED"/>
    <property type="match status" value="1"/>
</dbReference>
<dbReference type="Pfam" id="PF23598">
    <property type="entry name" value="LRR_14"/>
    <property type="match status" value="1"/>
</dbReference>
<dbReference type="Pfam" id="PF00931">
    <property type="entry name" value="NB-ARC"/>
    <property type="match status" value="1"/>
</dbReference>
<dbReference type="Pfam" id="PF23559">
    <property type="entry name" value="WH_DRP"/>
    <property type="match status" value="1"/>
</dbReference>
<dbReference type="PRINTS" id="PR00364">
    <property type="entry name" value="DISEASERSIST"/>
</dbReference>
<dbReference type="SUPFAM" id="SSF52058">
    <property type="entry name" value="L domain-like"/>
    <property type="match status" value="1"/>
</dbReference>
<dbReference type="SUPFAM" id="SSF52540">
    <property type="entry name" value="P-loop containing nucleoside triphosphate hydrolases"/>
    <property type="match status" value="1"/>
</dbReference>
<reference key="1">
    <citation type="journal article" date="2000" name="Nature">
        <title>Sequence and analysis of chromosome 1 of the plant Arabidopsis thaliana.</title>
        <authorList>
            <person name="Theologis A."/>
            <person name="Ecker J.R."/>
            <person name="Palm C.J."/>
            <person name="Federspiel N.A."/>
            <person name="Kaul S."/>
            <person name="White O."/>
            <person name="Alonso J."/>
            <person name="Altafi H."/>
            <person name="Araujo R."/>
            <person name="Bowman C.L."/>
            <person name="Brooks S.Y."/>
            <person name="Buehler E."/>
            <person name="Chan A."/>
            <person name="Chao Q."/>
            <person name="Chen H."/>
            <person name="Cheuk R.F."/>
            <person name="Chin C.W."/>
            <person name="Chung M.K."/>
            <person name="Conn L."/>
            <person name="Conway A.B."/>
            <person name="Conway A.R."/>
            <person name="Creasy T.H."/>
            <person name="Dewar K."/>
            <person name="Dunn P."/>
            <person name="Etgu P."/>
            <person name="Feldblyum T.V."/>
            <person name="Feng J.-D."/>
            <person name="Fong B."/>
            <person name="Fujii C.Y."/>
            <person name="Gill J.E."/>
            <person name="Goldsmith A.D."/>
            <person name="Haas B."/>
            <person name="Hansen N.F."/>
            <person name="Hughes B."/>
            <person name="Huizar L."/>
            <person name="Hunter J.L."/>
            <person name="Jenkins J."/>
            <person name="Johnson-Hopson C."/>
            <person name="Khan S."/>
            <person name="Khaykin E."/>
            <person name="Kim C.J."/>
            <person name="Koo H.L."/>
            <person name="Kremenetskaia I."/>
            <person name="Kurtz D.B."/>
            <person name="Kwan A."/>
            <person name="Lam B."/>
            <person name="Langin-Hooper S."/>
            <person name="Lee A."/>
            <person name="Lee J.M."/>
            <person name="Lenz C.A."/>
            <person name="Li J.H."/>
            <person name="Li Y.-P."/>
            <person name="Lin X."/>
            <person name="Liu S.X."/>
            <person name="Liu Z.A."/>
            <person name="Luros J.S."/>
            <person name="Maiti R."/>
            <person name="Marziali A."/>
            <person name="Militscher J."/>
            <person name="Miranda M."/>
            <person name="Nguyen M."/>
            <person name="Nierman W.C."/>
            <person name="Osborne B.I."/>
            <person name="Pai G."/>
            <person name="Peterson J."/>
            <person name="Pham P.K."/>
            <person name="Rizzo M."/>
            <person name="Rooney T."/>
            <person name="Rowley D."/>
            <person name="Sakano H."/>
            <person name="Salzberg S.L."/>
            <person name="Schwartz J.R."/>
            <person name="Shinn P."/>
            <person name="Southwick A.M."/>
            <person name="Sun H."/>
            <person name="Tallon L.J."/>
            <person name="Tambunga G."/>
            <person name="Toriumi M.J."/>
            <person name="Town C.D."/>
            <person name="Utterback T."/>
            <person name="Van Aken S."/>
            <person name="Vaysberg M."/>
            <person name="Vysotskaia V.S."/>
            <person name="Walker M."/>
            <person name="Wu D."/>
            <person name="Yu G."/>
            <person name="Fraser C.M."/>
            <person name="Venter J.C."/>
            <person name="Davis R.W."/>
        </authorList>
    </citation>
    <scope>NUCLEOTIDE SEQUENCE [LARGE SCALE GENOMIC DNA]</scope>
    <source>
        <strain>cv. Columbia</strain>
    </source>
</reference>
<reference key="2">
    <citation type="journal article" date="2017" name="Plant J.">
        <title>Araport11: a complete reannotation of the Arabidopsis thaliana reference genome.</title>
        <authorList>
            <person name="Cheng C.Y."/>
            <person name="Krishnakumar V."/>
            <person name="Chan A.P."/>
            <person name="Thibaud-Nissen F."/>
            <person name="Schobel S."/>
            <person name="Town C.D."/>
        </authorList>
    </citation>
    <scope>GENOME REANNOTATION</scope>
    <source>
        <strain>cv. Columbia</strain>
    </source>
</reference>
<reference key="3">
    <citation type="journal article" date="2012" name="Cell Host Microbe">
        <title>Disruption of PAMP-induced MAP kinase cascade by a Pseudomonas syringae effector activates plant immunity mediated by the NB-LRR protein SUMM2.</title>
        <authorList>
            <person name="Zhang Z."/>
            <person name="Wu Y."/>
            <person name="Gao M."/>
            <person name="Zhang J."/>
            <person name="Kong Q."/>
            <person name="Liu Y."/>
            <person name="Ba H."/>
            <person name="Zhou J."/>
            <person name="Zhang Y."/>
        </authorList>
    </citation>
    <scope>FUNCTION</scope>
    <scope>ACTIVITY REGULATION</scope>
    <scope>MUTAGENESIS OF GLY-2; SER-33; PRO-152; GLY-186; LEU-255; PRO-307 AND ASP-478</scope>
</reference>
<reference key="4">
    <citation type="journal article" date="2012" name="Plant Cell">
        <title>The MEKK1-MKK1/MKK2-MPK4 kinase cascade negatively regulates immunity mediated by a mitogen-activated protein kinase kinase kinase in Arabidopsis.</title>
        <authorList>
            <person name="Kong Q."/>
            <person name="Qu N."/>
            <person name="Gao M."/>
            <person name="Zhang Z."/>
            <person name="Ding X."/>
            <person name="Yang F."/>
            <person name="Li Y."/>
            <person name="Dong O.X."/>
            <person name="Chen S."/>
            <person name="Li X."/>
            <person name="Zhang Y."/>
        </authorList>
    </citation>
    <scope>FUNCTION</scope>
</reference>
<reference key="5">
    <citation type="journal article" date="2015" name="EMBO J.">
        <title>The mRNA decay factor PAT1 functions in a pathway including MAP kinase 4 and immune receptor SUMM2.</title>
        <authorList>
            <person name="Roux M.E."/>
            <person name="Rasmussen M.W."/>
            <person name="Palma K."/>
            <person name="Lolle S."/>
            <person name="Regue A.M."/>
            <person name="Bethke G."/>
            <person name="Glazebrook J."/>
            <person name="Zhang W."/>
            <person name="Sieburth L."/>
            <person name="Larsen M.R."/>
            <person name="Mundy J."/>
            <person name="Petersen M."/>
        </authorList>
    </citation>
    <scope>INTERACTION WITH PAT1</scope>
</reference>